<dbReference type="EC" id="2.3.2.34" evidence="2"/>
<dbReference type="EMBL" id="BC133501">
    <property type="protein sequence ID" value="AAI33502.1"/>
    <property type="molecule type" value="mRNA"/>
</dbReference>
<dbReference type="RefSeq" id="NP_001076972.1">
    <property type="nucleotide sequence ID" value="NM_001083503.1"/>
</dbReference>
<dbReference type="SMR" id="A3KN22"/>
<dbReference type="FunCoup" id="A3KN22">
    <property type="interactions" value="2912"/>
</dbReference>
<dbReference type="STRING" id="9913.ENSBTAP00000067485"/>
<dbReference type="PaxDb" id="9913-ENSBTAP00000016937"/>
<dbReference type="PeptideAtlas" id="A3KN22"/>
<dbReference type="Ensembl" id="ENSBTAT00000016937.5">
    <property type="protein sequence ID" value="ENSBTAP00000016937.4"/>
    <property type="gene ID" value="ENSBTAG00000012744.6"/>
</dbReference>
<dbReference type="GeneID" id="613343"/>
<dbReference type="KEGG" id="bta:613343"/>
<dbReference type="CTD" id="9040"/>
<dbReference type="VEuPathDB" id="HostDB:ENSBTAG00000012744"/>
<dbReference type="VGNC" id="VGNC:36589">
    <property type="gene designation" value="UBE2M"/>
</dbReference>
<dbReference type="eggNOG" id="KOG0420">
    <property type="taxonomic scope" value="Eukaryota"/>
</dbReference>
<dbReference type="GeneTree" id="ENSGT00940000162814"/>
<dbReference type="HOGENOM" id="CLU_030988_6_0_1"/>
<dbReference type="InParanoid" id="A3KN22"/>
<dbReference type="OMA" id="CQVDFPD"/>
<dbReference type="OrthoDB" id="10249039at2759"/>
<dbReference type="TreeFam" id="TF101125"/>
<dbReference type="Reactome" id="R-BTA-2173789">
    <property type="pathway name" value="TGF-beta receptor signaling activates SMADs"/>
</dbReference>
<dbReference type="Reactome" id="R-BTA-5607761">
    <property type="pathway name" value="Dectin-1 mediated noncanonical NF-kB signaling"/>
</dbReference>
<dbReference type="Reactome" id="R-BTA-5676590">
    <property type="pathway name" value="NIK--&gt;noncanonical NF-kB signaling"/>
</dbReference>
<dbReference type="Reactome" id="R-BTA-8951664">
    <property type="pathway name" value="Neddylation"/>
</dbReference>
<dbReference type="Reactome" id="R-BTA-983168">
    <property type="pathway name" value="Antigen processing: Ubiquitination &amp; Proteasome degradation"/>
</dbReference>
<dbReference type="UniPathway" id="UPA00885"/>
<dbReference type="Proteomes" id="UP000009136">
    <property type="component" value="Chromosome 18"/>
</dbReference>
<dbReference type="Bgee" id="ENSBTAG00000012744">
    <property type="expression patterns" value="Expressed in temporal cortex and 104 other cell types or tissues"/>
</dbReference>
<dbReference type="GO" id="GO:0005829">
    <property type="term" value="C:cytosol"/>
    <property type="evidence" value="ECO:0000318"/>
    <property type="project" value="GO_Central"/>
</dbReference>
<dbReference type="GO" id="GO:0005634">
    <property type="term" value="C:nucleus"/>
    <property type="evidence" value="ECO:0000318"/>
    <property type="project" value="GO_Central"/>
</dbReference>
<dbReference type="GO" id="GO:0005524">
    <property type="term" value="F:ATP binding"/>
    <property type="evidence" value="ECO:0007669"/>
    <property type="project" value="UniProtKB-KW"/>
</dbReference>
<dbReference type="GO" id="GO:0061654">
    <property type="term" value="F:NEDD8 conjugating enzyme activity"/>
    <property type="evidence" value="ECO:0007669"/>
    <property type="project" value="UniProtKB-EC"/>
</dbReference>
<dbReference type="GO" id="GO:0019788">
    <property type="term" value="F:NEDD8 transferase activity"/>
    <property type="evidence" value="ECO:0000250"/>
    <property type="project" value="UniProtKB"/>
</dbReference>
<dbReference type="GO" id="GO:0004842">
    <property type="term" value="F:ubiquitin-protein transferase activity"/>
    <property type="evidence" value="ECO:0000250"/>
    <property type="project" value="UniProtKB"/>
</dbReference>
<dbReference type="GO" id="GO:0036211">
    <property type="term" value="P:protein modification process"/>
    <property type="evidence" value="ECO:0000250"/>
    <property type="project" value="UniProtKB"/>
</dbReference>
<dbReference type="GO" id="GO:0045116">
    <property type="term" value="P:protein neddylation"/>
    <property type="evidence" value="ECO:0000250"/>
    <property type="project" value="UniProtKB"/>
</dbReference>
<dbReference type="CDD" id="cd23794">
    <property type="entry name" value="UBCc_UBE2F_UBE2M"/>
    <property type="match status" value="1"/>
</dbReference>
<dbReference type="FunFam" id="3.10.110.10:FF:000239">
    <property type="entry name" value="NEDD8-conjugating enzyme Ubc12"/>
    <property type="match status" value="1"/>
</dbReference>
<dbReference type="Gene3D" id="3.10.110.10">
    <property type="entry name" value="Ubiquitin Conjugating Enzyme"/>
    <property type="match status" value="1"/>
</dbReference>
<dbReference type="InterPro" id="IPR050113">
    <property type="entry name" value="Ub_conjugating_enzyme"/>
</dbReference>
<dbReference type="InterPro" id="IPR000608">
    <property type="entry name" value="UBQ-conjugat_E2_core"/>
</dbReference>
<dbReference type="InterPro" id="IPR023313">
    <property type="entry name" value="UBQ-conjugating_AS"/>
</dbReference>
<dbReference type="InterPro" id="IPR016135">
    <property type="entry name" value="UBQ-conjugating_enzyme/RWD"/>
</dbReference>
<dbReference type="PANTHER" id="PTHR24067">
    <property type="entry name" value="UBIQUITIN-CONJUGATING ENZYME E2"/>
    <property type="match status" value="1"/>
</dbReference>
<dbReference type="Pfam" id="PF00179">
    <property type="entry name" value="UQ_con"/>
    <property type="match status" value="1"/>
</dbReference>
<dbReference type="SMART" id="SM00212">
    <property type="entry name" value="UBCc"/>
    <property type="match status" value="1"/>
</dbReference>
<dbReference type="SUPFAM" id="SSF54495">
    <property type="entry name" value="UBC-like"/>
    <property type="match status" value="1"/>
</dbReference>
<dbReference type="PROSITE" id="PS00183">
    <property type="entry name" value="UBC_1"/>
    <property type="match status" value="1"/>
</dbReference>
<dbReference type="PROSITE" id="PS50127">
    <property type="entry name" value="UBC_2"/>
    <property type="match status" value="1"/>
</dbReference>
<evidence type="ECO:0000250" key="1"/>
<evidence type="ECO:0000250" key="2">
    <source>
        <dbReference type="UniProtKB" id="P61081"/>
    </source>
</evidence>
<evidence type="ECO:0000250" key="3">
    <source>
        <dbReference type="UniProtKB" id="P61082"/>
    </source>
</evidence>
<evidence type="ECO:0000255" key="4">
    <source>
        <dbReference type="PROSITE-ProRule" id="PRU00388"/>
    </source>
</evidence>
<evidence type="ECO:0000255" key="5">
    <source>
        <dbReference type="PROSITE-ProRule" id="PRU10133"/>
    </source>
</evidence>
<evidence type="ECO:0000256" key="6">
    <source>
        <dbReference type="SAM" id="MobiDB-lite"/>
    </source>
</evidence>
<accession>A3KN22</accession>
<sequence length="183" mass="20900">MIKLFSLKQQKKEEESAGGTKGSSKKASAAQLRIQKDINELNLPKTCDISFSDPDDLLNFKLVICPDEGFYKSGKFVFSFKVGQGYPHDPPKVKCETMVYHPNIDLEGNVCLNILREDWKPVLTINSIIYGLQYLFLEPNPEDPLNKEAAEVLQNNRRLFEQNVQRSMRGGYIGSTYFERCLK</sequence>
<name>UBC12_BOVIN</name>
<keyword id="KW-0007">Acetylation</keyword>
<keyword id="KW-0067">ATP-binding</keyword>
<keyword id="KW-0488">Methylation</keyword>
<keyword id="KW-0547">Nucleotide-binding</keyword>
<keyword id="KW-0597">Phosphoprotein</keyword>
<keyword id="KW-1185">Reference proteome</keyword>
<keyword id="KW-0808">Transferase</keyword>
<keyword id="KW-0833">Ubl conjugation pathway</keyword>
<comment type="function">
    <text evidence="2">Accepts the ubiquitin-like protein NEDD8 from the UBA3-NAE1 E1 complex and catalyzes its covalent attachment to other proteins. The specific interaction with the E3 ubiquitin ligase RBX1, but not RBX2, suggests that the RBX1-UBE2M complex neddylates specific target proteins, such as CUL1, CUL2, CUL3 and CUL4. Involved in cell proliferation.</text>
</comment>
<comment type="catalytic activity">
    <reaction evidence="2">
        <text>[E1 NEDD8-activating enzyme]-S-[NEDD8 protein]-yl-L-cysteine + [E2 NEDD8-conjugating enzyme]-L-cysteine = [E1 NEDD8-activating enzyme]-L-cysteine + [E2 NEDD8-conjugating enzyme]-S-[NEDD8-protein]-yl-L-cysteine.</text>
        <dbReference type="EC" id="2.3.2.34"/>
    </reaction>
</comment>
<comment type="pathway">
    <text>Protein modification; protein neddylation.</text>
</comment>
<comment type="subunit">
    <text evidence="2">Interacts with UBA3 and RBX1. Interacts (N-terminally acetylated form) with (via DCUN1 domain) DCUN1D1, DCUN1D2, DCUN1D3, DCUN1D4 and DCUN1D5.</text>
</comment>
<comment type="domain">
    <text evidence="1">Both the N-terminal docking peptide and the catalytic core domain must bind the UBA3-NAE1 complex simultaneously for optimal transfer of NEDD8.</text>
</comment>
<comment type="PTM">
    <text evidence="2">The acetylation of Met-1 increases affinity for DCUN1D1 by about 2 orders of magnitude and is crucial for NEDD8 transfer to cullins.</text>
</comment>
<comment type="similarity">
    <text evidence="4">Belongs to the ubiquitin-conjugating enzyme family. UBC12 subfamily.</text>
</comment>
<proteinExistence type="evidence at transcript level"/>
<protein>
    <recommendedName>
        <fullName>NEDD8-conjugating enzyme Ubc12</fullName>
        <ecNumber evidence="2">2.3.2.34</ecNumber>
    </recommendedName>
    <alternativeName>
        <fullName>NEDD8 carrier protein</fullName>
    </alternativeName>
    <alternativeName>
        <fullName>Ubiquitin-conjugating enzyme E2 M</fullName>
    </alternativeName>
</protein>
<gene>
    <name type="primary">UBE2M</name>
    <name type="synonym">UBC12</name>
</gene>
<organism>
    <name type="scientific">Bos taurus</name>
    <name type="common">Bovine</name>
    <dbReference type="NCBI Taxonomy" id="9913"/>
    <lineage>
        <taxon>Eukaryota</taxon>
        <taxon>Metazoa</taxon>
        <taxon>Chordata</taxon>
        <taxon>Craniata</taxon>
        <taxon>Vertebrata</taxon>
        <taxon>Euteleostomi</taxon>
        <taxon>Mammalia</taxon>
        <taxon>Eutheria</taxon>
        <taxon>Laurasiatheria</taxon>
        <taxon>Artiodactyla</taxon>
        <taxon>Ruminantia</taxon>
        <taxon>Pecora</taxon>
        <taxon>Bovidae</taxon>
        <taxon>Bovinae</taxon>
        <taxon>Bos</taxon>
    </lineage>
</organism>
<feature type="chain" id="PRO_0000328397" description="NEDD8-conjugating enzyme Ubc12">
    <location>
        <begin position="1"/>
        <end position="183"/>
    </location>
</feature>
<feature type="domain" description="UBC core" evidence="4">
    <location>
        <begin position="29"/>
        <end position="173"/>
    </location>
</feature>
<feature type="region of interest" description="Interaction with UBA3" evidence="1">
    <location>
        <begin position="1"/>
        <end position="57"/>
    </location>
</feature>
<feature type="region of interest" description="Disordered" evidence="6">
    <location>
        <begin position="1"/>
        <end position="29"/>
    </location>
</feature>
<feature type="active site" description="Glycyl thioester intermediate" evidence="4 5">
    <location>
        <position position="111"/>
    </location>
</feature>
<feature type="modified residue" description="N-acetylmethionine" evidence="2">
    <location>
        <position position="1"/>
    </location>
</feature>
<feature type="modified residue" description="N6-acetyllysine" evidence="2">
    <location>
        <position position="3"/>
    </location>
</feature>
<feature type="modified residue" description="Phosphoserine" evidence="2">
    <location>
        <position position="50"/>
    </location>
</feature>
<feature type="modified residue" description="Asymmetric dimethylarginine; alternate" evidence="3">
    <location>
        <position position="169"/>
    </location>
</feature>
<feature type="modified residue" description="Omega-N-methylarginine; alternate" evidence="2">
    <location>
        <position position="169"/>
    </location>
</feature>
<reference key="1">
    <citation type="submission" date="2007-02" db="EMBL/GenBank/DDBJ databases">
        <authorList>
            <consortium name="NIH - Mammalian Gene Collection (MGC) project"/>
        </authorList>
    </citation>
    <scope>NUCLEOTIDE SEQUENCE [LARGE SCALE MRNA]</scope>
    <source>
        <strain>Crossbred X Angus</strain>
        <tissue>Liver</tissue>
    </source>
</reference>